<comment type="function">
    <text evidence="1">Attaches a formyl group to the free amino group of methionyl-tRNA(fMet). The formyl group appears to play a dual role in the initiator identity of N-formylmethionyl-tRNA by promoting its recognition by IF2 and preventing the misappropriation of this tRNA by the elongation apparatus.</text>
</comment>
<comment type="catalytic activity">
    <reaction evidence="1">
        <text>L-methionyl-tRNA(fMet) + (6R)-10-formyltetrahydrofolate = N-formyl-L-methionyl-tRNA(fMet) + (6S)-5,6,7,8-tetrahydrofolate + H(+)</text>
        <dbReference type="Rhea" id="RHEA:24380"/>
        <dbReference type="Rhea" id="RHEA-COMP:9952"/>
        <dbReference type="Rhea" id="RHEA-COMP:9953"/>
        <dbReference type="ChEBI" id="CHEBI:15378"/>
        <dbReference type="ChEBI" id="CHEBI:57453"/>
        <dbReference type="ChEBI" id="CHEBI:78530"/>
        <dbReference type="ChEBI" id="CHEBI:78844"/>
        <dbReference type="ChEBI" id="CHEBI:195366"/>
        <dbReference type="EC" id="2.1.2.9"/>
    </reaction>
</comment>
<comment type="similarity">
    <text evidence="1">Belongs to the Fmt family.</text>
</comment>
<reference key="1">
    <citation type="submission" date="2008-08" db="EMBL/GenBank/DDBJ databases">
        <title>The complete genome sequence of Coprothermobacter proteolyticus strain ATCC 5245 / DSM 5265 / BT.</title>
        <authorList>
            <person name="Dodson R.J."/>
            <person name="Durkin A.S."/>
            <person name="Wu M."/>
            <person name="Eisen J."/>
            <person name="Sutton G."/>
        </authorList>
    </citation>
    <scope>NUCLEOTIDE SEQUENCE [LARGE SCALE GENOMIC DNA]</scope>
    <source>
        <strain>ATCC 35245 / DSM 5265 / OCM 4 / BT</strain>
    </source>
</reference>
<protein>
    <recommendedName>
        <fullName evidence="1">Methionyl-tRNA formyltransferase</fullName>
        <ecNumber evidence="1">2.1.2.9</ecNumber>
    </recommendedName>
</protein>
<feature type="chain" id="PRO_1000203851" description="Methionyl-tRNA formyltransferase">
    <location>
        <begin position="1"/>
        <end position="304"/>
    </location>
</feature>
<feature type="binding site" evidence="1">
    <location>
        <begin position="107"/>
        <end position="110"/>
    </location>
    <ligand>
        <name>(6S)-5,6,7,8-tetrahydrofolate</name>
        <dbReference type="ChEBI" id="CHEBI:57453"/>
    </ligand>
</feature>
<name>FMT_COPPD</name>
<dbReference type="EC" id="2.1.2.9" evidence="1"/>
<dbReference type="EMBL" id="CP001145">
    <property type="protein sequence ID" value="ACI17648.1"/>
    <property type="molecule type" value="Genomic_DNA"/>
</dbReference>
<dbReference type="RefSeq" id="WP_012544300.1">
    <property type="nucleotide sequence ID" value="NC_011295.1"/>
</dbReference>
<dbReference type="SMR" id="B5Y7I0"/>
<dbReference type="STRING" id="309798.COPRO5265_0361"/>
<dbReference type="KEGG" id="cpo:COPRO5265_0361"/>
<dbReference type="eggNOG" id="COG0223">
    <property type="taxonomic scope" value="Bacteria"/>
</dbReference>
<dbReference type="HOGENOM" id="CLU_033347_1_1_9"/>
<dbReference type="OrthoDB" id="9802815at2"/>
<dbReference type="Proteomes" id="UP000001732">
    <property type="component" value="Chromosome"/>
</dbReference>
<dbReference type="GO" id="GO:0004479">
    <property type="term" value="F:methionyl-tRNA formyltransferase activity"/>
    <property type="evidence" value="ECO:0007669"/>
    <property type="project" value="UniProtKB-UniRule"/>
</dbReference>
<dbReference type="CDD" id="cd08646">
    <property type="entry name" value="FMT_core_Met-tRNA-FMT_N"/>
    <property type="match status" value="1"/>
</dbReference>
<dbReference type="CDD" id="cd08704">
    <property type="entry name" value="Met_tRNA_FMT_C"/>
    <property type="match status" value="1"/>
</dbReference>
<dbReference type="Gene3D" id="3.40.50.12230">
    <property type="match status" value="1"/>
</dbReference>
<dbReference type="HAMAP" id="MF_00182">
    <property type="entry name" value="Formyl_trans"/>
    <property type="match status" value="1"/>
</dbReference>
<dbReference type="InterPro" id="IPR005794">
    <property type="entry name" value="Fmt"/>
</dbReference>
<dbReference type="InterPro" id="IPR005793">
    <property type="entry name" value="Formyl_trans_C"/>
</dbReference>
<dbReference type="InterPro" id="IPR002376">
    <property type="entry name" value="Formyl_transf_N"/>
</dbReference>
<dbReference type="InterPro" id="IPR036477">
    <property type="entry name" value="Formyl_transf_N_sf"/>
</dbReference>
<dbReference type="InterPro" id="IPR011034">
    <property type="entry name" value="Formyl_transferase-like_C_sf"/>
</dbReference>
<dbReference type="InterPro" id="IPR044135">
    <property type="entry name" value="Met-tRNA-FMT_C"/>
</dbReference>
<dbReference type="InterPro" id="IPR041711">
    <property type="entry name" value="Met-tRNA-FMT_N"/>
</dbReference>
<dbReference type="PANTHER" id="PTHR11138">
    <property type="entry name" value="METHIONYL-TRNA FORMYLTRANSFERASE"/>
    <property type="match status" value="1"/>
</dbReference>
<dbReference type="PANTHER" id="PTHR11138:SF5">
    <property type="entry name" value="METHIONYL-TRNA FORMYLTRANSFERASE, MITOCHONDRIAL"/>
    <property type="match status" value="1"/>
</dbReference>
<dbReference type="Pfam" id="PF02911">
    <property type="entry name" value="Formyl_trans_C"/>
    <property type="match status" value="1"/>
</dbReference>
<dbReference type="Pfam" id="PF00551">
    <property type="entry name" value="Formyl_trans_N"/>
    <property type="match status" value="1"/>
</dbReference>
<dbReference type="SUPFAM" id="SSF50486">
    <property type="entry name" value="FMT C-terminal domain-like"/>
    <property type="match status" value="1"/>
</dbReference>
<dbReference type="SUPFAM" id="SSF53328">
    <property type="entry name" value="Formyltransferase"/>
    <property type="match status" value="1"/>
</dbReference>
<gene>
    <name evidence="1" type="primary">fmt</name>
    <name type="ordered locus">COPRO5265_0361</name>
</gene>
<keyword id="KW-0648">Protein biosynthesis</keyword>
<keyword id="KW-1185">Reference proteome</keyword>
<keyword id="KW-0808">Transferase</keyword>
<sequence length="304" mass="33894">MKIAFFSSGTFGLPVLEELKKENHEIVLITKVDAPSGRGLKLQPSPPAVVAEALQIPIVKVNSLKNDFIEWYFSQGFDVAIVVDFGFYIPKQLFQADKPVMVNIHPSLLPKYRGPNPIRRAICSGELETGVTLIKISEKMDEGDIYLQERVLIDPDDDYVSLTPKLQHVSMELLKKFFLELKQGNLRAFPQLGDPSYAPKFTPDELWIDWQKPAHDIQNQVRALADVGAKTTLGSKLVKIFKVRISGMEDSLPPGHYVAEKESLYVGTGQGSLEILSLQQEGRKKQDAASFVKGLREKEGVFGG</sequence>
<accession>B5Y7I0</accession>
<organism>
    <name type="scientific">Coprothermobacter proteolyticus (strain ATCC 35245 / DSM 5265 / OCM 4 / BT)</name>
    <dbReference type="NCBI Taxonomy" id="309798"/>
    <lineage>
        <taxon>Bacteria</taxon>
        <taxon>Pseudomonadati</taxon>
        <taxon>Coprothermobacterota</taxon>
        <taxon>Coprothermobacteria</taxon>
        <taxon>Coprothermobacterales</taxon>
        <taxon>Coprothermobacteraceae</taxon>
        <taxon>Coprothermobacter</taxon>
    </lineage>
</organism>
<evidence type="ECO:0000255" key="1">
    <source>
        <dbReference type="HAMAP-Rule" id="MF_00182"/>
    </source>
</evidence>
<proteinExistence type="inferred from homology"/>